<feature type="chain" id="PRO_0000225188" description="Crossover junction endodeoxyribonuclease RuvC">
    <location>
        <begin position="1"/>
        <end position="174"/>
    </location>
</feature>
<feature type="active site" evidence="1">
    <location>
        <position position="8"/>
    </location>
</feature>
<feature type="active site" evidence="1">
    <location>
        <position position="69"/>
    </location>
</feature>
<feature type="active site" evidence="1">
    <location>
        <position position="141"/>
    </location>
</feature>
<feature type="binding site" evidence="1">
    <location>
        <position position="8"/>
    </location>
    <ligand>
        <name>Mg(2+)</name>
        <dbReference type="ChEBI" id="CHEBI:18420"/>
        <label>1</label>
    </ligand>
</feature>
<feature type="binding site" evidence="1">
    <location>
        <position position="69"/>
    </location>
    <ligand>
        <name>Mg(2+)</name>
        <dbReference type="ChEBI" id="CHEBI:18420"/>
        <label>2</label>
    </ligand>
</feature>
<feature type="binding site" evidence="1">
    <location>
        <position position="141"/>
    </location>
    <ligand>
        <name>Mg(2+)</name>
        <dbReference type="ChEBI" id="CHEBI:18420"/>
        <label>1</label>
    </ligand>
</feature>
<reference key="1">
    <citation type="journal article" date="2005" name="Genome Res.">
        <title>Comparative and functional genomic analyses of the pathogenicity of phytopathogen Xanthomonas campestris pv. campestris.</title>
        <authorList>
            <person name="Qian W."/>
            <person name="Jia Y."/>
            <person name="Ren S.-X."/>
            <person name="He Y.-Q."/>
            <person name="Feng J.-X."/>
            <person name="Lu L.-F."/>
            <person name="Sun Q."/>
            <person name="Ying G."/>
            <person name="Tang D.-J."/>
            <person name="Tang H."/>
            <person name="Wu W."/>
            <person name="Hao P."/>
            <person name="Wang L."/>
            <person name="Jiang B.-L."/>
            <person name="Zeng S."/>
            <person name="Gu W.-Y."/>
            <person name="Lu G."/>
            <person name="Rong L."/>
            <person name="Tian Y."/>
            <person name="Yao Z."/>
            <person name="Fu G."/>
            <person name="Chen B."/>
            <person name="Fang R."/>
            <person name="Qiang B."/>
            <person name="Chen Z."/>
            <person name="Zhao G.-P."/>
            <person name="Tang J.-L."/>
            <person name="He C."/>
        </authorList>
    </citation>
    <scope>NUCLEOTIDE SEQUENCE [LARGE SCALE GENOMIC DNA]</scope>
    <source>
        <strain>8004</strain>
    </source>
</reference>
<sequence length="174" mass="18707">MTRILGIDPGSQRTGIGIIDVDESGRSRHVFHAPLVLLGEGDFAQRLKRLLHGLGELIETYQPQEVAIEKVFMGKSADSALKLGHARGAAICAVVLRDLPVHEYAATEIKLALVGKGGADKVQVQHMVGIMLNLKGKLQADAADALAVAITHAHVRATAQRLGVNTQQAWSRKR</sequence>
<protein>
    <recommendedName>
        <fullName evidence="1">Crossover junction endodeoxyribonuclease RuvC</fullName>
        <ecNumber evidence="1">3.1.21.10</ecNumber>
    </recommendedName>
    <alternativeName>
        <fullName evidence="1">Holliday junction nuclease RuvC</fullName>
    </alternativeName>
    <alternativeName>
        <fullName evidence="1">Holliday junction resolvase RuvC</fullName>
    </alternativeName>
</protein>
<comment type="function">
    <text evidence="1">The RuvA-RuvB-RuvC complex processes Holliday junction (HJ) DNA during genetic recombination and DNA repair. Endonuclease that resolves HJ intermediates. Cleaves cruciform DNA by making single-stranded nicks across the HJ at symmetrical positions within the homologous arms, yielding a 5'-phosphate and a 3'-hydroxyl group; requires a central core of homology in the junction. The consensus cleavage sequence is 5'-(A/T)TT(C/G)-3'. Cleavage occurs on the 3'-side of the TT dinucleotide at the point of strand exchange. HJ branch migration catalyzed by RuvA-RuvB allows RuvC to scan DNA until it finds its consensus sequence, where it cleaves and resolves the cruciform DNA.</text>
</comment>
<comment type="catalytic activity">
    <reaction evidence="1">
        <text>Endonucleolytic cleavage at a junction such as a reciprocal single-stranded crossover between two homologous DNA duplexes (Holliday junction).</text>
        <dbReference type="EC" id="3.1.21.10"/>
    </reaction>
</comment>
<comment type="cofactor">
    <cofactor evidence="1">
        <name>Mg(2+)</name>
        <dbReference type="ChEBI" id="CHEBI:18420"/>
    </cofactor>
    <text evidence="1">Binds 2 Mg(2+) ion per subunit.</text>
</comment>
<comment type="subunit">
    <text evidence="1">Homodimer which binds Holliday junction (HJ) DNA. The HJ becomes 2-fold symmetrical on binding to RuvC with unstacked arms; it has a different conformation from HJ DNA in complex with RuvA. In the full resolvosome a probable DNA-RuvA(4)-RuvB(12)-RuvC(2) complex forms which resolves the HJ.</text>
</comment>
<comment type="subcellular location">
    <subcellularLocation>
        <location evidence="1">Cytoplasm</location>
    </subcellularLocation>
</comment>
<comment type="similarity">
    <text evidence="1">Belongs to the RuvC family.</text>
</comment>
<gene>
    <name evidence="1" type="primary">ruvC</name>
    <name type="ordered locus">XC_1132</name>
</gene>
<keyword id="KW-0963">Cytoplasm</keyword>
<keyword id="KW-0227">DNA damage</keyword>
<keyword id="KW-0233">DNA recombination</keyword>
<keyword id="KW-0234">DNA repair</keyword>
<keyword id="KW-0238">DNA-binding</keyword>
<keyword id="KW-0255">Endonuclease</keyword>
<keyword id="KW-0378">Hydrolase</keyword>
<keyword id="KW-0460">Magnesium</keyword>
<keyword id="KW-0479">Metal-binding</keyword>
<keyword id="KW-0540">Nuclease</keyword>
<dbReference type="EC" id="3.1.21.10" evidence="1"/>
<dbReference type="EMBL" id="CP000050">
    <property type="protein sequence ID" value="AAY48202.1"/>
    <property type="molecule type" value="Genomic_DNA"/>
</dbReference>
<dbReference type="RefSeq" id="WP_011038141.1">
    <property type="nucleotide sequence ID" value="NZ_CP155948.1"/>
</dbReference>
<dbReference type="SMR" id="Q4UXM1"/>
<dbReference type="GeneID" id="58012430"/>
<dbReference type="KEGG" id="xcb:XC_1132"/>
<dbReference type="HOGENOM" id="CLU_091257_2_1_6"/>
<dbReference type="Proteomes" id="UP000000420">
    <property type="component" value="Chromosome"/>
</dbReference>
<dbReference type="GO" id="GO:0005737">
    <property type="term" value="C:cytoplasm"/>
    <property type="evidence" value="ECO:0007669"/>
    <property type="project" value="UniProtKB-SubCell"/>
</dbReference>
<dbReference type="GO" id="GO:0048476">
    <property type="term" value="C:Holliday junction resolvase complex"/>
    <property type="evidence" value="ECO:0007669"/>
    <property type="project" value="UniProtKB-UniRule"/>
</dbReference>
<dbReference type="GO" id="GO:0008821">
    <property type="term" value="F:crossover junction DNA endonuclease activity"/>
    <property type="evidence" value="ECO:0007669"/>
    <property type="project" value="UniProtKB-UniRule"/>
</dbReference>
<dbReference type="GO" id="GO:0003677">
    <property type="term" value="F:DNA binding"/>
    <property type="evidence" value="ECO:0007669"/>
    <property type="project" value="UniProtKB-KW"/>
</dbReference>
<dbReference type="GO" id="GO:0000287">
    <property type="term" value="F:magnesium ion binding"/>
    <property type="evidence" value="ECO:0007669"/>
    <property type="project" value="UniProtKB-UniRule"/>
</dbReference>
<dbReference type="GO" id="GO:0006310">
    <property type="term" value="P:DNA recombination"/>
    <property type="evidence" value="ECO:0007669"/>
    <property type="project" value="UniProtKB-UniRule"/>
</dbReference>
<dbReference type="GO" id="GO:0006281">
    <property type="term" value="P:DNA repair"/>
    <property type="evidence" value="ECO:0007669"/>
    <property type="project" value="UniProtKB-UniRule"/>
</dbReference>
<dbReference type="CDD" id="cd16962">
    <property type="entry name" value="RuvC"/>
    <property type="match status" value="1"/>
</dbReference>
<dbReference type="FunFam" id="3.30.420.10:FF:000002">
    <property type="entry name" value="Crossover junction endodeoxyribonuclease RuvC"/>
    <property type="match status" value="1"/>
</dbReference>
<dbReference type="Gene3D" id="3.30.420.10">
    <property type="entry name" value="Ribonuclease H-like superfamily/Ribonuclease H"/>
    <property type="match status" value="1"/>
</dbReference>
<dbReference type="HAMAP" id="MF_00034">
    <property type="entry name" value="RuvC"/>
    <property type="match status" value="1"/>
</dbReference>
<dbReference type="InterPro" id="IPR012337">
    <property type="entry name" value="RNaseH-like_sf"/>
</dbReference>
<dbReference type="InterPro" id="IPR036397">
    <property type="entry name" value="RNaseH_sf"/>
</dbReference>
<dbReference type="InterPro" id="IPR020563">
    <property type="entry name" value="X-over_junc_endoDNase_Mg_BS"/>
</dbReference>
<dbReference type="InterPro" id="IPR002176">
    <property type="entry name" value="X-over_junc_endoDNase_RuvC"/>
</dbReference>
<dbReference type="NCBIfam" id="TIGR00228">
    <property type="entry name" value="ruvC"/>
    <property type="match status" value="1"/>
</dbReference>
<dbReference type="PANTHER" id="PTHR30194">
    <property type="entry name" value="CROSSOVER JUNCTION ENDODEOXYRIBONUCLEASE RUVC"/>
    <property type="match status" value="1"/>
</dbReference>
<dbReference type="PANTHER" id="PTHR30194:SF3">
    <property type="entry name" value="CROSSOVER JUNCTION ENDODEOXYRIBONUCLEASE RUVC"/>
    <property type="match status" value="1"/>
</dbReference>
<dbReference type="Pfam" id="PF02075">
    <property type="entry name" value="RuvC"/>
    <property type="match status" value="1"/>
</dbReference>
<dbReference type="PRINTS" id="PR00696">
    <property type="entry name" value="RSOLVASERUVC"/>
</dbReference>
<dbReference type="SUPFAM" id="SSF53098">
    <property type="entry name" value="Ribonuclease H-like"/>
    <property type="match status" value="1"/>
</dbReference>
<dbReference type="PROSITE" id="PS01321">
    <property type="entry name" value="RUVC"/>
    <property type="match status" value="1"/>
</dbReference>
<organism>
    <name type="scientific">Xanthomonas campestris pv. campestris (strain 8004)</name>
    <dbReference type="NCBI Taxonomy" id="314565"/>
    <lineage>
        <taxon>Bacteria</taxon>
        <taxon>Pseudomonadati</taxon>
        <taxon>Pseudomonadota</taxon>
        <taxon>Gammaproteobacteria</taxon>
        <taxon>Lysobacterales</taxon>
        <taxon>Lysobacteraceae</taxon>
        <taxon>Xanthomonas</taxon>
    </lineage>
</organism>
<evidence type="ECO:0000255" key="1">
    <source>
        <dbReference type="HAMAP-Rule" id="MF_00034"/>
    </source>
</evidence>
<accession>Q4UXM1</accession>
<proteinExistence type="inferred from homology"/>
<name>RUVC_XANC8</name>